<gene>
    <name type="ordered locus">Veis_4238</name>
</gene>
<comment type="subcellular location">
    <subcellularLocation>
        <location evidence="1">Cytoplasm</location>
    </subcellularLocation>
</comment>
<comment type="similarity">
    <text evidence="1">Belongs to the TACO1 family.</text>
</comment>
<feature type="chain" id="PRO_1000045390" description="Probable transcriptional regulatory protein Veis_4238">
    <location>
        <begin position="1"/>
        <end position="239"/>
    </location>
</feature>
<feature type="region of interest" description="Disordered" evidence="2">
    <location>
        <begin position="1"/>
        <end position="22"/>
    </location>
</feature>
<proteinExistence type="inferred from homology"/>
<name>Y4238_VEREI</name>
<reference key="1">
    <citation type="submission" date="2006-12" db="EMBL/GenBank/DDBJ databases">
        <title>Complete sequence of chromosome 1 of Verminephrobacter eiseniae EF01-2.</title>
        <authorList>
            <person name="Copeland A."/>
            <person name="Lucas S."/>
            <person name="Lapidus A."/>
            <person name="Barry K."/>
            <person name="Detter J.C."/>
            <person name="Glavina del Rio T."/>
            <person name="Dalin E."/>
            <person name="Tice H."/>
            <person name="Pitluck S."/>
            <person name="Chertkov O."/>
            <person name="Brettin T."/>
            <person name="Bruce D."/>
            <person name="Han C."/>
            <person name="Tapia R."/>
            <person name="Gilna P."/>
            <person name="Schmutz J."/>
            <person name="Larimer F."/>
            <person name="Land M."/>
            <person name="Hauser L."/>
            <person name="Kyrpides N."/>
            <person name="Kim E."/>
            <person name="Stahl D."/>
            <person name="Richardson P."/>
        </authorList>
    </citation>
    <scope>NUCLEOTIDE SEQUENCE [LARGE SCALE GENOMIC DNA]</scope>
    <source>
        <strain>EF01-2</strain>
    </source>
</reference>
<organism>
    <name type="scientific">Verminephrobacter eiseniae (strain EF01-2)</name>
    <dbReference type="NCBI Taxonomy" id="391735"/>
    <lineage>
        <taxon>Bacteria</taxon>
        <taxon>Pseudomonadati</taxon>
        <taxon>Pseudomonadota</taxon>
        <taxon>Betaproteobacteria</taxon>
        <taxon>Burkholderiales</taxon>
        <taxon>Comamonadaceae</taxon>
        <taxon>Verminephrobacter</taxon>
    </lineage>
</organism>
<keyword id="KW-0963">Cytoplasm</keyword>
<keyword id="KW-0238">DNA-binding</keyword>
<keyword id="KW-1185">Reference proteome</keyword>
<keyword id="KW-0804">Transcription</keyword>
<keyword id="KW-0805">Transcription regulation</keyword>
<evidence type="ECO:0000255" key="1">
    <source>
        <dbReference type="HAMAP-Rule" id="MF_00693"/>
    </source>
</evidence>
<evidence type="ECO:0000256" key="2">
    <source>
        <dbReference type="SAM" id="MobiDB-lite"/>
    </source>
</evidence>
<protein>
    <recommendedName>
        <fullName evidence="1">Probable transcriptional regulatory protein Veis_4238</fullName>
    </recommendedName>
</protein>
<accession>A1WQN6</accession>
<sequence>MAGHSKWANIQHRKGRQDEKRGRIWTRIMREITVAARAGGGDLSANPRLRLALDKARAANMPAERIKYNIDKATGNAEGQSYEEIRYEGYGIGGAAIIVDTMTDNRLRTVAEVRHAFSKHGANMGTEGSVVFQFKHCGQLVYAPGSSEDQVMEVALQAGAEDVIMGEDGAIEVLTLPADFEAVKNALQAAGLRPELAEVTMRAENTIELQGEDAARMQKLLDALEDLDDTQAVYHNATL</sequence>
<dbReference type="EMBL" id="CP000542">
    <property type="protein sequence ID" value="ABM59943.1"/>
    <property type="molecule type" value="Genomic_DNA"/>
</dbReference>
<dbReference type="RefSeq" id="WP_011811930.1">
    <property type="nucleotide sequence ID" value="NC_008786.1"/>
</dbReference>
<dbReference type="SMR" id="A1WQN6"/>
<dbReference type="STRING" id="391735.Veis_4238"/>
<dbReference type="GeneID" id="76462566"/>
<dbReference type="KEGG" id="vei:Veis_4238"/>
<dbReference type="eggNOG" id="COG0217">
    <property type="taxonomic scope" value="Bacteria"/>
</dbReference>
<dbReference type="HOGENOM" id="CLU_062974_2_2_4"/>
<dbReference type="OrthoDB" id="9781053at2"/>
<dbReference type="Proteomes" id="UP000000374">
    <property type="component" value="Chromosome"/>
</dbReference>
<dbReference type="GO" id="GO:0005829">
    <property type="term" value="C:cytosol"/>
    <property type="evidence" value="ECO:0007669"/>
    <property type="project" value="TreeGrafter"/>
</dbReference>
<dbReference type="GO" id="GO:0003677">
    <property type="term" value="F:DNA binding"/>
    <property type="evidence" value="ECO:0007669"/>
    <property type="project" value="UniProtKB-UniRule"/>
</dbReference>
<dbReference type="GO" id="GO:0006355">
    <property type="term" value="P:regulation of DNA-templated transcription"/>
    <property type="evidence" value="ECO:0007669"/>
    <property type="project" value="UniProtKB-UniRule"/>
</dbReference>
<dbReference type="FunFam" id="1.10.10.200:FF:000002">
    <property type="entry name" value="Probable transcriptional regulatory protein CLM62_37755"/>
    <property type="match status" value="1"/>
</dbReference>
<dbReference type="FunFam" id="3.30.70.980:FF:000002">
    <property type="entry name" value="Probable transcriptional regulatory protein YebC"/>
    <property type="match status" value="1"/>
</dbReference>
<dbReference type="Gene3D" id="1.10.10.200">
    <property type="match status" value="1"/>
</dbReference>
<dbReference type="Gene3D" id="3.30.70.980">
    <property type="match status" value="2"/>
</dbReference>
<dbReference type="HAMAP" id="MF_00693">
    <property type="entry name" value="Transcrip_reg_TACO1"/>
    <property type="match status" value="1"/>
</dbReference>
<dbReference type="InterPro" id="IPR017856">
    <property type="entry name" value="Integrase-like_N"/>
</dbReference>
<dbReference type="InterPro" id="IPR048300">
    <property type="entry name" value="TACO1_YebC-like_2nd/3rd_dom"/>
</dbReference>
<dbReference type="InterPro" id="IPR049083">
    <property type="entry name" value="TACO1_YebC_N"/>
</dbReference>
<dbReference type="InterPro" id="IPR002876">
    <property type="entry name" value="Transcrip_reg_TACO1-like"/>
</dbReference>
<dbReference type="InterPro" id="IPR026564">
    <property type="entry name" value="Transcrip_reg_TACO1-like_dom3"/>
</dbReference>
<dbReference type="InterPro" id="IPR029072">
    <property type="entry name" value="YebC-like"/>
</dbReference>
<dbReference type="NCBIfam" id="NF001030">
    <property type="entry name" value="PRK00110.1"/>
    <property type="match status" value="1"/>
</dbReference>
<dbReference type="NCBIfam" id="NF009044">
    <property type="entry name" value="PRK12378.1"/>
    <property type="match status" value="1"/>
</dbReference>
<dbReference type="NCBIfam" id="TIGR01033">
    <property type="entry name" value="YebC/PmpR family DNA-binding transcriptional regulator"/>
    <property type="match status" value="1"/>
</dbReference>
<dbReference type="PANTHER" id="PTHR12532:SF6">
    <property type="entry name" value="TRANSCRIPTIONAL REGULATORY PROTEIN YEBC-RELATED"/>
    <property type="match status" value="1"/>
</dbReference>
<dbReference type="PANTHER" id="PTHR12532">
    <property type="entry name" value="TRANSLATIONAL ACTIVATOR OF CYTOCHROME C OXIDASE 1"/>
    <property type="match status" value="1"/>
</dbReference>
<dbReference type="Pfam" id="PF20772">
    <property type="entry name" value="TACO1_YebC_N"/>
    <property type="match status" value="1"/>
</dbReference>
<dbReference type="Pfam" id="PF01709">
    <property type="entry name" value="Transcrip_reg"/>
    <property type="match status" value="1"/>
</dbReference>
<dbReference type="SUPFAM" id="SSF75625">
    <property type="entry name" value="YebC-like"/>
    <property type="match status" value="1"/>
</dbReference>